<dbReference type="EMBL" id="M23247">
    <property type="protein sequence ID" value="AAA72719.1"/>
    <property type="molecule type" value="Genomic_DNA"/>
</dbReference>
<dbReference type="EMBL" id="AE004437">
    <property type="protein sequence ID" value="AAG19769.1"/>
    <property type="molecule type" value="Genomic_DNA"/>
</dbReference>
<dbReference type="PIR" id="A43650">
    <property type="entry name" value="A43650"/>
</dbReference>
<dbReference type="PIR" id="E84300">
    <property type="entry name" value="E84300"/>
</dbReference>
<dbReference type="RefSeq" id="WP_010903066.1">
    <property type="nucleotide sequence ID" value="NC_002607.1"/>
</dbReference>
<dbReference type="SMR" id="Q9HPU8"/>
<dbReference type="STRING" id="64091.VNG_1464G"/>
<dbReference type="PaxDb" id="64091-VNG_1464G"/>
<dbReference type="GeneID" id="68694177"/>
<dbReference type="KEGG" id="hal:VNG_1464G"/>
<dbReference type="PATRIC" id="fig|64091.14.peg.1119"/>
<dbReference type="HOGENOM" id="CLU_010057_3_0_2"/>
<dbReference type="InParanoid" id="Q9HPU8"/>
<dbReference type="OrthoDB" id="106505at2157"/>
<dbReference type="PhylomeDB" id="Q9HPU8"/>
<dbReference type="Proteomes" id="UP000000554">
    <property type="component" value="Chromosome"/>
</dbReference>
<dbReference type="GO" id="GO:0000160">
    <property type="term" value="P:phosphorelay signal transduction system"/>
    <property type="evidence" value="ECO:0007669"/>
    <property type="project" value="InterPro"/>
</dbReference>
<dbReference type="CDD" id="cd00130">
    <property type="entry name" value="PAS"/>
    <property type="match status" value="1"/>
</dbReference>
<dbReference type="Gene3D" id="3.30.450.40">
    <property type="match status" value="1"/>
</dbReference>
<dbReference type="Gene3D" id="3.40.50.2300">
    <property type="match status" value="1"/>
</dbReference>
<dbReference type="Gene3D" id="3.30.450.20">
    <property type="entry name" value="PAS domain"/>
    <property type="match status" value="1"/>
</dbReference>
<dbReference type="InterPro" id="IPR031803">
    <property type="entry name" value="BAT_GAF/HTH-assoc"/>
</dbReference>
<dbReference type="InterPro" id="IPR003018">
    <property type="entry name" value="GAF"/>
</dbReference>
<dbReference type="InterPro" id="IPR029016">
    <property type="entry name" value="GAF-like_dom_sf"/>
</dbReference>
<dbReference type="InterPro" id="IPR007050">
    <property type="entry name" value="HTH_bacterioopsin"/>
</dbReference>
<dbReference type="InterPro" id="IPR001610">
    <property type="entry name" value="PAC"/>
</dbReference>
<dbReference type="InterPro" id="IPR000014">
    <property type="entry name" value="PAS"/>
</dbReference>
<dbReference type="InterPro" id="IPR000700">
    <property type="entry name" value="PAS-assoc_C"/>
</dbReference>
<dbReference type="InterPro" id="IPR035965">
    <property type="entry name" value="PAS-like_dom_sf"/>
</dbReference>
<dbReference type="InterPro" id="IPR001789">
    <property type="entry name" value="Sig_transdc_resp-reg_receiver"/>
</dbReference>
<dbReference type="NCBIfam" id="TIGR00229">
    <property type="entry name" value="sensory_box"/>
    <property type="match status" value="1"/>
</dbReference>
<dbReference type="PANTHER" id="PTHR46175">
    <property type="entry name" value="BACTERIOOPSIN TRANSCRIPTIONAL ACTIVATOR"/>
    <property type="match status" value="1"/>
</dbReference>
<dbReference type="PANTHER" id="PTHR46175:SF4">
    <property type="entry name" value="BACTERIOOPSIN TRANSCRIPTIONAL ACTIVATOR"/>
    <property type="match status" value="1"/>
</dbReference>
<dbReference type="Pfam" id="PF15915">
    <property type="entry name" value="BAT"/>
    <property type="match status" value="1"/>
</dbReference>
<dbReference type="Pfam" id="PF13185">
    <property type="entry name" value="GAF_2"/>
    <property type="match status" value="1"/>
</dbReference>
<dbReference type="Pfam" id="PF04967">
    <property type="entry name" value="HTH_10"/>
    <property type="match status" value="1"/>
</dbReference>
<dbReference type="Pfam" id="PF13426">
    <property type="entry name" value="PAS_9"/>
    <property type="match status" value="1"/>
</dbReference>
<dbReference type="SMART" id="SM00086">
    <property type="entry name" value="PAC"/>
    <property type="match status" value="1"/>
</dbReference>
<dbReference type="SUPFAM" id="SSF55781">
    <property type="entry name" value="GAF domain-like"/>
    <property type="match status" value="1"/>
</dbReference>
<dbReference type="SUPFAM" id="SSF55785">
    <property type="entry name" value="PYP-like sensor domain (PAS domain)"/>
    <property type="match status" value="1"/>
</dbReference>
<dbReference type="PROSITE" id="PS50113">
    <property type="entry name" value="PAC"/>
    <property type="match status" value="1"/>
</dbReference>
<dbReference type="PROSITE" id="PS50112">
    <property type="entry name" value="PAS"/>
    <property type="match status" value="1"/>
</dbReference>
<dbReference type="PROSITE" id="PS50110">
    <property type="entry name" value="RESPONSE_REGULATORY"/>
    <property type="match status" value="1"/>
</dbReference>
<comment type="function">
    <text evidence="5 6">Involved in activating bop (bacterioopsin) and brp gene expression at low-oxygen tension, which naturally occurs in stationary phase.</text>
</comment>
<organism>
    <name type="scientific">Halobacterium salinarum (strain ATCC 700922 / JCM 11081 / NRC-1)</name>
    <name type="common">Halobacterium halobium</name>
    <dbReference type="NCBI Taxonomy" id="64091"/>
    <lineage>
        <taxon>Archaea</taxon>
        <taxon>Methanobacteriati</taxon>
        <taxon>Methanobacteriota</taxon>
        <taxon>Stenosarchaea group</taxon>
        <taxon>Halobacteria</taxon>
        <taxon>Halobacteriales</taxon>
        <taxon>Halobacteriaceae</taxon>
        <taxon>Halobacterium</taxon>
        <taxon>Halobacterium salinarum NRC-34001</taxon>
    </lineage>
</organism>
<accession>Q9HPU8</accession>
<accession>P13260</accession>
<name>BAT_HALSA</name>
<feature type="chain" id="PRO_0000064835" description="Bacterioopsin transcriptional activator">
    <location>
        <begin position="1"/>
        <end position="674"/>
    </location>
</feature>
<feature type="domain" description="Response regulatory" evidence="4">
    <location>
        <begin position="19"/>
        <end position="131"/>
    </location>
</feature>
<feature type="domain" description="PAS" evidence="2">
    <location>
        <begin position="156"/>
        <end position="229"/>
    </location>
</feature>
<feature type="domain" description="PAC" evidence="3">
    <location>
        <begin position="230"/>
        <end position="284"/>
    </location>
</feature>
<feature type="domain" description="GAF">
    <location>
        <begin position="285"/>
        <end position="454"/>
    </location>
</feature>
<feature type="domain" description="HTH bat-type" evidence="1">
    <location>
        <begin position="617"/>
        <end position="668"/>
    </location>
</feature>
<feature type="sequence conflict" description="In Ref. 1; AAA72719." evidence="7" ref="1">
    <original>DRVAE</original>
    <variation>EPRGG</variation>
    <location>
        <begin position="217"/>
        <end position="221"/>
    </location>
</feature>
<evidence type="ECO:0000255" key="1"/>
<evidence type="ECO:0000255" key="2">
    <source>
        <dbReference type="PROSITE-ProRule" id="PRU00140"/>
    </source>
</evidence>
<evidence type="ECO:0000255" key="3">
    <source>
        <dbReference type="PROSITE-ProRule" id="PRU00141"/>
    </source>
</evidence>
<evidence type="ECO:0000255" key="4">
    <source>
        <dbReference type="PROSITE-ProRule" id="PRU00169"/>
    </source>
</evidence>
<evidence type="ECO:0000269" key="5">
    <source>
    </source>
</evidence>
<evidence type="ECO:0000269" key="6">
    <source>
    </source>
</evidence>
<evidence type="ECO:0000305" key="7"/>
<sequence>MTSVQNTESETAAGATTIGVLFAGSDPETGPAACDLDEDGRFDVTQIRDFVAARDRVDDPDIDCVVAVHEPDGFDGVAFLEAVRQTHAEFPVVVVPTAVDEDVARRAVDADATGLVPAVSEDATAAIADRIEQSAPAHSEDTETRMPISDLTVESERRLKEQALDEAPIGITISDATDPEEPIIYINDSFEDITGYSPDEVVGANHRFLQGPKTNEDRVAEFWTAITEDHDTQVVLRNYRRDGSLFWNQVDISPIYDEDGTVSHYVGFQMDVSERMAAQQELQGERQSLDRLLDRVNGLMNDVTSALVRAADREEIETRITDRIGTGGEYAGAWFGRYDATEDTITVAEAAGDCEGCDGDVFDLASAGEAVALLQDVVEQREALVSTDADGVSGTADGDACVLVPVTYRSTTYGVLAVSTAEHRIDDREQVLLRSLGRTTGASINDALTRRTIATDTVLNIGVELSDTALFLVELAGATDTTFEQEATIADSQTQGVLMLVTTPHDDPQAVVDTALGYDAVQDAEVIVSTDDESVVQFDLSSSPLVDVLSECGSRVIRMHADRTTLELDVRVGTEGAARRVLSTLRDKYADVELVAYHEDDPEQTPHGFREELRNDLTDRQLTALQKAYVSGYFEWPRRAEGKQLAESMDIVPSTYHQHLQAAKQKLVGAFFEE</sequence>
<protein>
    <recommendedName>
        <fullName>Bacterioopsin transcriptional activator</fullName>
    </recommendedName>
</protein>
<gene>
    <name type="primary">bat</name>
    <name type="ordered locus">VNG_1464G</name>
</gene>
<reference key="1">
    <citation type="journal article" date="1988" name="J. Bacteriol.">
        <title>Characterization of a second gene involved in bacterio-opsin gene expression in a halophilic archaebacterium.</title>
        <authorList>
            <person name="Leong D."/>
            <person name="Pfeifer F."/>
            <person name="Boyer H."/>
            <person name="Betlach M."/>
        </authorList>
    </citation>
    <scope>NUCLEOTIDE SEQUENCE [GENOMIC DNA]</scope>
</reference>
<reference key="2">
    <citation type="journal article" date="2000" name="Proc. Natl. Acad. Sci. U.S.A.">
        <title>Genome sequence of Halobacterium species NRC-1.</title>
        <authorList>
            <person name="Ng W.V."/>
            <person name="Kennedy S.P."/>
            <person name="Mahairas G.G."/>
            <person name="Berquist B."/>
            <person name="Pan M."/>
            <person name="Shukla H.D."/>
            <person name="Lasky S.R."/>
            <person name="Baliga N.S."/>
            <person name="Thorsson V."/>
            <person name="Sbrogna J."/>
            <person name="Swartzell S."/>
            <person name="Weir D."/>
            <person name="Hall J."/>
            <person name="Dahl T.A."/>
            <person name="Welti R."/>
            <person name="Goo Y.A."/>
            <person name="Leithauser B."/>
            <person name="Keller K."/>
            <person name="Cruz R."/>
            <person name="Danson M.J."/>
            <person name="Hough D.W."/>
            <person name="Maddocks D.G."/>
            <person name="Jablonski P.E."/>
            <person name="Krebs M.P."/>
            <person name="Angevine C.M."/>
            <person name="Dale H."/>
            <person name="Isenbarger T.A."/>
            <person name="Peck R.F."/>
            <person name="Pohlschroder M."/>
            <person name="Spudich J.L."/>
            <person name="Jung K.-H."/>
            <person name="Alam M."/>
            <person name="Freitas T."/>
            <person name="Hou S."/>
            <person name="Daniels C.J."/>
            <person name="Dennis P.P."/>
            <person name="Omer A.D."/>
            <person name="Ebhardt H."/>
            <person name="Lowe T.M."/>
            <person name="Liang P."/>
            <person name="Riley M."/>
            <person name="Hood L."/>
            <person name="DasSarma S."/>
        </authorList>
    </citation>
    <scope>NUCLEOTIDE SEQUENCE [LARGE SCALE GENOMIC DNA]</scope>
    <source>
        <strain>ATCC 700922 / JCM 11081 / NRC-1</strain>
    </source>
</reference>
<reference key="3">
    <citation type="journal article" date="1988" name="J. Bacteriol.">
        <title>Transcription of genes involved in bacterio-opsin gene expression in mutants of a halophilic archaebacterium.</title>
        <authorList>
            <person name="Leong D."/>
            <person name="Boyer H."/>
            <person name="Betlach M."/>
        </authorList>
    </citation>
    <scope>FUNCTION</scope>
</reference>
<reference key="4">
    <citation type="journal article" date="1994" name="Proc. Natl. Acad. Sci. U.S.A.">
        <title>The bat gene of Halobacterium halobium encodes a trans-acting oxygen inducibility factor.</title>
        <authorList>
            <person name="Gropp F."/>
            <person name="Betlach M.C."/>
        </authorList>
    </citation>
    <scope>FUNCTION AS A TRANSCRIPTIONAL REGULATOR</scope>
</reference>
<proteinExistence type="evidence at protein level"/>
<keyword id="KW-0010">Activator</keyword>
<keyword id="KW-1185">Reference proteome</keyword>
<keyword id="KW-0804">Transcription</keyword>
<keyword id="KW-0805">Transcription regulation</keyword>